<gene>
    <name type="primary">PE_PGRS20</name>
    <name type="ordered locus">Rv1068c</name>
    <name type="ORF">MTV017.21c</name>
</gene>
<evidence type="ECO:0000255" key="1"/>
<evidence type="ECO:0000256" key="2">
    <source>
        <dbReference type="SAM" id="MobiDB-lite"/>
    </source>
</evidence>
<evidence type="ECO:0000305" key="3"/>
<reference key="1">
    <citation type="journal article" date="1998" name="Nature">
        <title>Deciphering the biology of Mycobacterium tuberculosis from the complete genome sequence.</title>
        <authorList>
            <person name="Cole S.T."/>
            <person name="Brosch R."/>
            <person name="Parkhill J."/>
            <person name="Garnier T."/>
            <person name="Churcher C.M."/>
            <person name="Harris D.E."/>
            <person name="Gordon S.V."/>
            <person name="Eiglmeier K."/>
            <person name="Gas S."/>
            <person name="Barry C.E. III"/>
            <person name="Tekaia F."/>
            <person name="Badcock K."/>
            <person name="Basham D."/>
            <person name="Brown D."/>
            <person name="Chillingworth T."/>
            <person name="Connor R."/>
            <person name="Davies R.M."/>
            <person name="Devlin K."/>
            <person name="Feltwell T."/>
            <person name="Gentles S."/>
            <person name="Hamlin N."/>
            <person name="Holroyd S."/>
            <person name="Hornsby T."/>
            <person name="Jagels K."/>
            <person name="Krogh A."/>
            <person name="McLean J."/>
            <person name="Moule S."/>
            <person name="Murphy L.D."/>
            <person name="Oliver S."/>
            <person name="Osborne J."/>
            <person name="Quail M.A."/>
            <person name="Rajandream M.A."/>
            <person name="Rogers J."/>
            <person name="Rutter S."/>
            <person name="Seeger K."/>
            <person name="Skelton S."/>
            <person name="Squares S."/>
            <person name="Squares R."/>
            <person name="Sulston J.E."/>
            <person name="Taylor K."/>
            <person name="Whitehead S."/>
            <person name="Barrell B.G."/>
        </authorList>
    </citation>
    <scope>NUCLEOTIDE SEQUENCE [LARGE SCALE GENOMIC DNA]</scope>
    <source>
        <strain>ATCC 25618 / H37Rv</strain>
    </source>
</reference>
<feature type="chain" id="PRO_0000216163" description="Uncharacterized PE-PGRS family protein PE_PGRS20">
    <location>
        <begin position="1"/>
        <end position="463"/>
    </location>
</feature>
<feature type="domain" description="PE" evidence="1">
    <location>
        <begin position="1"/>
        <end position="93"/>
    </location>
</feature>
<feature type="region of interest" description="Disordered" evidence="2">
    <location>
        <begin position="231"/>
        <end position="320"/>
    </location>
</feature>
<feature type="region of interest" description="Disordered" evidence="2">
    <location>
        <begin position="408"/>
        <end position="463"/>
    </location>
</feature>
<feature type="compositionally biased region" description="Gly residues" evidence="2">
    <location>
        <begin position="408"/>
        <end position="451"/>
    </location>
</feature>
<proteinExistence type="inferred from homology"/>
<comment type="similarity">
    <text evidence="3">Belongs to the mycobacterial PE family. PGRS subfamily.</text>
</comment>
<protein>
    <recommendedName>
        <fullName>Uncharacterized PE-PGRS family protein PE_PGRS20</fullName>
    </recommendedName>
</protein>
<organism>
    <name type="scientific">Mycobacterium tuberculosis (strain ATCC 25618 / H37Rv)</name>
    <dbReference type="NCBI Taxonomy" id="83332"/>
    <lineage>
        <taxon>Bacteria</taxon>
        <taxon>Bacillati</taxon>
        <taxon>Actinomycetota</taxon>
        <taxon>Actinomycetes</taxon>
        <taxon>Mycobacteriales</taxon>
        <taxon>Mycobacteriaceae</taxon>
        <taxon>Mycobacterium</taxon>
        <taxon>Mycobacterium tuberculosis complex</taxon>
    </lineage>
</organism>
<accession>P9WIF9</accession>
<accession>L0T776</accession>
<accession>O53416</accession>
<sequence length="463" mass="39305">MSYMIAVPDMLSSAAGDLASIGSSINASTRAAAAATTRLLPAAADEVSAHIAALFSGHGEGYQAIARQMAAFHDQFTLALTSSAGAYASAEATNVEQQVLGLINAPTQALLGRPLIGNGADGTAANPNGGAGGLLYGNGGNGFSQTTAGLTGGTGGSAGLIGNGGNGGAGGAGANGGAGGNGGWLYGSGGNGGAGGAGPAGAIGAPGVAGGAGGAGGTAGLFGNGGAGGAGGAGGAGGRGGDGGSAGWLSGNGGDAGTGGGGGNAGNGGNGGSAGWLSGNGGTGGGGGTAGAGGQGGNGNSGIDPGNGGQGADTGNAGNGGHGGSAAKLFGDGGAGGAGGMGSTGGTGGGGGFGGGTGGNGGNGHAGGAGGSGGTAGLLGSGGSGGTGGDGGNGGLGAGSGAKGNGGNGGDGGKGGDAQLIGNGGNGGNGGKGGTGLMPGINGTGGAGGSRGQISGNPGTPGQ</sequence>
<name>PG20_MYCTU</name>
<dbReference type="EMBL" id="AL123456">
    <property type="protein sequence ID" value="CCP43819.1"/>
    <property type="molecule type" value="Genomic_DNA"/>
</dbReference>
<dbReference type="PIR" id="B70893">
    <property type="entry name" value="B70893"/>
</dbReference>
<dbReference type="RefSeq" id="WP_010886106.1">
    <property type="nucleotide sequence ID" value="NZ_NVQJ01000072.1"/>
</dbReference>
<dbReference type="RefSeq" id="YP_177781.1">
    <property type="nucleotide sequence ID" value="NC_000962.3"/>
</dbReference>
<dbReference type="STRING" id="83332.Rv1068c"/>
<dbReference type="PaxDb" id="83332-Rv1068c"/>
<dbReference type="GeneID" id="887123"/>
<dbReference type="KEGG" id="mtu:Rv1068c"/>
<dbReference type="KEGG" id="mtv:RVBD_1068c"/>
<dbReference type="PATRIC" id="fig|83332.111.peg.1187"/>
<dbReference type="TubercuList" id="Rv1068c"/>
<dbReference type="eggNOG" id="COG0657">
    <property type="taxonomic scope" value="Bacteria"/>
</dbReference>
<dbReference type="InParanoid" id="P9WIF9"/>
<dbReference type="OrthoDB" id="4737262at2"/>
<dbReference type="Proteomes" id="UP000001584">
    <property type="component" value="Chromosome"/>
</dbReference>
<dbReference type="Gene3D" id="1.10.287.850">
    <property type="entry name" value="HP0062-like domain"/>
    <property type="match status" value="1"/>
</dbReference>
<dbReference type="InterPro" id="IPR000084">
    <property type="entry name" value="PE-PGRS_N"/>
</dbReference>
<dbReference type="InterPro" id="IPR048996">
    <property type="entry name" value="PGRS_rpt"/>
</dbReference>
<dbReference type="Pfam" id="PF00934">
    <property type="entry name" value="PE"/>
    <property type="match status" value="1"/>
</dbReference>
<dbReference type="Pfam" id="PF21526">
    <property type="entry name" value="PGRS"/>
    <property type="match status" value="1"/>
</dbReference>
<dbReference type="PRINTS" id="PR01228">
    <property type="entry name" value="EGGSHELL"/>
</dbReference>
<dbReference type="SUPFAM" id="SSF140459">
    <property type="entry name" value="PE/PPE dimer-like"/>
    <property type="match status" value="1"/>
</dbReference>
<keyword id="KW-1185">Reference proteome</keyword>